<dbReference type="EMBL" id="BA000036">
    <property type="protein sequence ID" value="BAB99583.1"/>
    <property type="molecule type" value="Genomic_DNA"/>
</dbReference>
<dbReference type="EMBL" id="AB047851">
    <property type="protein sequence ID" value="BAB13772.1"/>
    <property type="molecule type" value="Genomic_DNA"/>
</dbReference>
<dbReference type="EMBL" id="BX927154">
    <property type="protein sequence ID" value="CAF20531.1"/>
    <property type="molecule type" value="Genomic_DNA"/>
</dbReference>
<dbReference type="EMBL" id="AJ306418">
    <property type="protein sequence ID" value="CAC33827.1"/>
    <property type="molecule type" value="Genomic_DNA"/>
</dbReference>
<dbReference type="RefSeq" id="NP_601394.1">
    <property type="nucleotide sequence ID" value="NC_003450.3"/>
</dbReference>
<dbReference type="RefSeq" id="WP_011014946.1">
    <property type="nucleotide sequence ID" value="NC_006958.1"/>
</dbReference>
<dbReference type="PDB" id="7Q21">
    <property type="method" value="EM"/>
    <property type="resolution" value="3.00 A"/>
    <property type="chains" value="A/a=1-408"/>
</dbReference>
<dbReference type="PDB" id="7QHM">
    <property type="method" value="EM"/>
    <property type="resolution" value="2.80 A"/>
    <property type="chains" value="A/N=1-408"/>
</dbReference>
<dbReference type="PDB" id="7QHO">
    <property type="method" value="EM"/>
    <property type="resolution" value="3.10 A"/>
    <property type="chains" value="A/N=1-408"/>
</dbReference>
<dbReference type="PDBsum" id="7Q21"/>
<dbReference type="PDBsum" id="7QHM"/>
<dbReference type="PDBsum" id="7QHO"/>
<dbReference type="EMDB" id="EMD-13777"/>
<dbReference type="EMDB" id="EMD-13976"/>
<dbReference type="EMDB" id="EMD-13977"/>
<dbReference type="SMR" id="Q79VE8"/>
<dbReference type="STRING" id="196627.cg2404"/>
<dbReference type="KEGG" id="cgb:cg2404"/>
<dbReference type="KEGG" id="cgl:Cgl2190"/>
<dbReference type="PATRIC" id="fig|196627.13.peg.2127"/>
<dbReference type="eggNOG" id="COG0723">
    <property type="taxonomic scope" value="Bacteria"/>
</dbReference>
<dbReference type="HOGENOM" id="CLU_050668_0_0_11"/>
<dbReference type="OrthoDB" id="9802613at2"/>
<dbReference type="BioCyc" id="CORYNE:G18NG-11782-MONOMER"/>
<dbReference type="Proteomes" id="UP000000582">
    <property type="component" value="Chromosome"/>
</dbReference>
<dbReference type="Proteomes" id="UP000001009">
    <property type="component" value="Chromosome"/>
</dbReference>
<dbReference type="GO" id="GO:0005886">
    <property type="term" value="C:plasma membrane"/>
    <property type="evidence" value="ECO:0007669"/>
    <property type="project" value="UniProtKB-SubCell"/>
</dbReference>
<dbReference type="GO" id="GO:0051537">
    <property type="term" value="F:2 iron, 2 sulfur cluster binding"/>
    <property type="evidence" value="ECO:0007669"/>
    <property type="project" value="UniProtKB-KW"/>
</dbReference>
<dbReference type="GO" id="GO:0046872">
    <property type="term" value="F:metal ion binding"/>
    <property type="evidence" value="ECO:0007669"/>
    <property type="project" value="UniProtKB-KW"/>
</dbReference>
<dbReference type="GO" id="GO:0004497">
    <property type="term" value="F:monooxygenase activity"/>
    <property type="evidence" value="ECO:0007669"/>
    <property type="project" value="UniProtKB-ARBA"/>
</dbReference>
<dbReference type="GO" id="GO:0016705">
    <property type="term" value="F:oxidoreductase activity, acting on paired donors, with incorporation or reduction of molecular oxygen"/>
    <property type="evidence" value="ECO:0007669"/>
    <property type="project" value="UniProtKB-ARBA"/>
</dbReference>
<dbReference type="CDD" id="cd03467">
    <property type="entry name" value="Rieske"/>
    <property type="match status" value="1"/>
</dbReference>
<dbReference type="Gene3D" id="2.102.10.10">
    <property type="entry name" value="Rieske [2Fe-2S] iron-sulphur domain"/>
    <property type="match status" value="1"/>
</dbReference>
<dbReference type="InterPro" id="IPR045603">
    <property type="entry name" value="QcrA_N"/>
</dbReference>
<dbReference type="InterPro" id="IPR017941">
    <property type="entry name" value="Rieske_2Fe-2S"/>
</dbReference>
<dbReference type="InterPro" id="IPR036922">
    <property type="entry name" value="Rieske_2Fe-2S_sf"/>
</dbReference>
<dbReference type="InterPro" id="IPR014349">
    <property type="entry name" value="Rieske_Fe-S_prot"/>
</dbReference>
<dbReference type="PANTHER" id="PTHR10134">
    <property type="entry name" value="CYTOCHROME B-C1 COMPLEX SUBUNIT RIESKE, MITOCHONDRIAL"/>
    <property type="match status" value="1"/>
</dbReference>
<dbReference type="Pfam" id="PF19297">
    <property type="entry name" value="QcrA_N"/>
    <property type="match status" value="1"/>
</dbReference>
<dbReference type="Pfam" id="PF00355">
    <property type="entry name" value="Rieske"/>
    <property type="match status" value="1"/>
</dbReference>
<dbReference type="SUPFAM" id="SSF50022">
    <property type="entry name" value="ISP domain"/>
    <property type="match status" value="1"/>
</dbReference>
<dbReference type="PROSITE" id="PS51296">
    <property type="entry name" value="RIESKE"/>
    <property type="match status" value="1"/>
</dbReference>
<gene>
    <name type="primary">qcrA</name>
    <name type="ordered locus">Cgl2190</name>
    <name type="ordered locus">cg2404</name>
</gene>
<proteinExistence type="evidence at protein level"/>
<feature type="chain" id="PRO_0000127790" description="Cytochrome bc1 complex Rieske iron-sulfur subunit">
    <location>
        <begin position="1"/>
        <end position="408"/>
    </location>
</feature>
<feature type="transmembrane region" description="Helical" evidence="1">
    <location>
        <begin position="56"/>
        <end position="76"/>
    </location>
</feature>
<feature type="transmembrane region" description="Helical" evidence="1">
    <location>
        <begin position="98"/>
        <end position="118"/>
    </location>
</feature>
<feature type="transmembrane region" description="Helical" evidence="1">
    <location>
        <begin position="162"/>
        <end position="182"/>
    </location>
</feature>
<feature type="domain" description="Rieske" evidence="2">
    <location>
        <begin position="293"/>
        <end position="390"/>
    </location>
</feature>
<feature type="binding site" evidence="2 6">
    <location>
        <position position="333"/>
    </location>
    <ligand>
        <name>[2Fe-2S] cluster</name>
        <dbReference type="ChEBI" id="CHEBI:190135"/>
    </ligand>
</feature>
<feature type="binding site" evidence="2 6">
    <location>
        <position position="335"/>
    </location>
    <ligand>
        <name>[2Fe-2S] cluster</name>
        <dbReference type="ChEBI" id="CHEBI:190135"/>
    </ligand>
</feature>
<feature type="binding site" evidence="2 6">
    <location>
        <position position="352"/>
    </location>
    <ligand>
        <name>[2Fe-2S] cluster</name>
        <dbReference type="ChEBI" id="CHEBI:190135"/>
    </ligand>
</feature>
<feature type="binding site" evidence="2 6">
    <location>
        <position position="355"/>
    </location>
    <ligand>
        <name>[2Fe-2S] cluster</name>
        <dbReference type="ChEBI" id="CHEBI:190135"/>
    </ligand>
</feature>
<feature type="disulfide bond" evidence="2 6">
    <location>
        <begin position="338"/>
        <end position="354"/>
    </location>
</feature>
<feature type="sequence conflict" description="In Ref. 2; BAB13772." evidence="5" ref="2">
    <original>A</original>
    <variation>P</variation>
    <location>
        <position position="44"/>
    </location>
</feature>
<feature type="sequence conflict" description="In Ref. 2; BAB13772." evidence="5" ref="2">
    <original>A</original>
    <variation>S</variation>
    <location>
        <position position="55"/>
    </location>
</feature>
<feature type="sequence conflict" description="In Ref. 2; BAB13772." evidence="5" ref="2">
    <original>N</original>
    <variation>K</variation>
    <location>
        <position position="191"/>
    </location>
</feature>
<feature type="sequence conflict" description="In Ref. 2; BAB13772." evidence="5" ref="2">
    <original>V</original>
    <variation>I</variation>
    <location>
        <position position="213"/>
    </location>
</feature>
<feature type="helix" evidence="9">
    <location>
        <begin position="11"/>
        <end position="16"/>
    </location>
</feature>
<feature type="helix" evidence="9">
    <location>
        <begin position="19"/>
        <end position="28"/>
    </location>
</feature>
<feature type="turn" evidence="9">
    <location>
        <begin position="29"/>
        <end position="31"/>
    </location>
</feature>
<feature type="strand" evidence="9">
    <location>
        <begin position="32"/>
        <end position="38"/>
    </location>
</feature>
<feature type="strand" evidence="10">
    <location>
        <begin position="43"/>
        <end position="45"/>
    </location>
</feature>
<feature type="helix" evidence="9">
    <location>
        <begin position="47"/>
        <end position="76"/>
    </location>
</feature>
<feature type="helix" evidence="9">
    <location>
        <begin position="89"/>
        <end position="93"/>
    </location>
</feature>
<feature type="helix" evidence="9">
    <location>
        <begin position="95"/>
        <end position="120"/>
    </location>
</feature>
<feature type="strand" evidence="9">
    <location>
        <begin position="124"/>
        <end position="130"/>
    </location>
</feature>
<feature type="helix" evidence="9">
    <location>
        <begin position="139"/>
        <end position="155"/>
    </location>
</feature>
<feature type="turn" evidence="9">
    <location>
        <begin position="157"/>
        <end position="159"/>
    </location>
</feature>
<feature type="helix" evidence="9">
    <location>
        <begin position="161"/>
        <end position="179"/>
    </location>
</feature>
<feature type="helix" evidence="9">
    <location>
        <begin position="180"/>
        <end position="184"/>
    </location>
</feature>
<feature type="strand" evidence="9">
    <location>
        <begin position="194"/>
        <end position="196"/>
    </location>
</feature>
<feature type="strand" evidence="9">
    <location>
        <begin position="201"/>
        <end position="206"/>
    </location>
</feature>
<feature type="helix" evidence="9">
    <location>
        <begin position="209"/>
        <end position="215"/>
    </location>
</feature>
<feature type="strand" evidence="9">
    <location>
        <begin position="219"/>
        <end position="224"/>
    </location>
</feature>
<feature type="strand" evidence="9">
    <location>
        <begin position="230"/>
        <end position="234"/>
    </location>
</feature>
<feature type="strand" evidence="9">
    <location>
        <begin position="237"/>
        <end position="241"/>
    </location>
</feature>
<feature type="strand" evidence="9">
    <location>
        <begin position="247"/>
        <end position="250"/>
    </location>
</feature>
<feature type="strand" evidence="9">
    <location>
        <begin position="260"/>
        <end position="268"/>
    </location>
</feature>
<feature type="helix" evidence="9">
    <location>
        <begin position="269"/>
        <end position="271"/>
    </location>
</feature>
<feature type="helix" evidence="9">
    <location>
        <begin position="275"/>
        <end position="277"/>
    </location>
</feature>
<feature type="helix" evidence="9">
    <location>
        <begin position="285"/>
        <end position="292"/>
    </location>
</feature>
<feature type="strand" evidence="9">
    <location>
        <begin position="299"/>
        <end position="303"/>
    </location>
</feature>
<feature type="helix" evidence="9">
    <location>
        <begin position="306"/>
        <end position="309"/>
    </location>
</feature>
<feature type="strand" evidence="9">
    <location>
        <begin position="326"/>
        <end position="332"/>
    </location>
</feature>
<feature type="turn" evidence="9">
    <location>
        <begin position="334"/>
        <end position="336"/>
    </location>
</feature>
<feature type="strand" evidence="9">
    <location>
        <begin position="342"/>
        <end position="344"/>
    </location>
</feature>
<feature type="turn" evidence="9">
    <location>
        <begin position="345"/>
        <end position="348"/>
    </location>
</feature>
<feature type="strand" evidence="9">
    <location>
        <begin position="349"/>
        <end position="351"/>
    </location>
</feature>
<feature type="turn" evidence="9">
    <location>
        <begin position="353"/>
        <end position="355"/>
    </location>
</feature>
<feature type="strand" evidence="9">
    <location>
        <begin position="358"/>
        <end position="360"/>
    </location>
</feature>
<feature type="turn" evidence="8">
    <location>
        <begin position="361"/>
        <end position="365"/>
    </location>
</feature>
<feature type="strand" evidence="9">
    <location>
        <begin position="367"/>
        <end position="371"/>
    </location>
</feature>
<feature type="strand" evidence="9">
    <location>
        <begin position="381"/>
        <end position="383"/>
    </location>
</feature>
<feature type="strand" evidence="8">
    <location>
        <begin position="385"/>
        <end position="387"/>
    </location>
</feature>
<feature type="strand" evidence="9">
    <location>
        <begin position="389"/>
        <end position="391"/>
    </location>
</feature>
<evidence type="ECO:0000255" key="1"/>
<evidence type="ECO:0000255" key="2">
    <source>
        <dbReference type="PROSITE-ProRule" id="PRU00628"/>
    </source>
</evidence>
<evidence type="ECO:0000269" key="3">
    <source>
    </source>
</evidence>
<evidence type="ECO:0000269" key="4">
    <source>
    </source>
</evidence>
<evidence type="ECO:0000305" key="5"/>
<evidence type="ECO:0000305" key="6">
    <source>
    </source>
</evidence>
<evidence type="ECO:0000305" key="7">
    <source>
    </source>
</evidence>
<evidence type="ECO:0007829" key="8">
    <source>
        <dbReference type="PDB" id="7Q21"/>
    </source>
</evidence>
<evidence type="ECO:0007829" key="9">
    <source>
        <dbReference type="PDB" id="7QHM"/>
    </source>
</evidence>
<evidence type="ECO:0007829" key="10">
    <source>
        <dbReference type="PDB" id="7QHO"/>
    </source>
</evidence>
<comment type="function">
    <text evidence="5 6 7">Iron-sulfur subunit of the cytochrome bc1 complex, an essential component of the respiratory electron transport chain required for ATP synthesis. The bc1 complex catalyzes the oxidation of menaquinol and the reduction of cytochrome c in the respiratory chain. The bc1 complex operates through a Q-cycle mechanism that couples electron transfer to generation of the proton gradient that drives ATP synthesis.</text>
</comment>
<comment type="cofactor">
    <cofactor evidence="2">
        <name>[2Fe-2S] cluster</name>
        <dbReference type="ChEBI" id="CHEBI:190135"/>
    </cofactor>
    <text evidence="2">Binds 1 [2Fe-2S] cluster per subunit.</text>
</comment>
<comment type="subunit">
    <text evidence="4">The cytochrome bc1 complex is composed of a cytochrome b (QcrB), the Rieske iron-sulfur protein (QcrA) and a diheme cytochrome c (QcrC) subunit. The bc1 complex forms a supercomplex with cytochrome c oxidase (cytochrome aa3).</text>
</comment>
<comment type="subcellular location">
    <subcellularLocation>
        <location evidence="1">Cell membrane</location>
        <topology evidence="1">Multi-pass membrane protein</topology>
    </subcellularLocation>
</comment>
<comment type="disruption phenotype">
    <text evidence="3">Cells lacking qcrCAB show strongly impaired growth in glucose minimal medium, which indicates that the bc1-aa3 pathway is the main route of respiration under these conditions.</text>
</comment>
<comment type="similarity">
    <text evidence="5">Belongs to the Rieske iron-sulfur protein family.</text>
</comment>
<name>QCRA_CORGL</name>
<organism>
    <name type="scientific">Corynebacterium glutamicum (strain ATCC 13032 / DSM 20300 / JCM 1318 / BCRC 11384 / CCUG 27702 / LMG 3730 / NBRC 12168 / NCIMB 10025 / NRRL B-2784 / 534)</name>
    <dbReference type="NCBI Taxonomy" id="196627"/>
    <lineage>
        <taxon>Bacteria</taxon>
        <taxon>Bacillati</taxon>
        <taxon>Actinomycetota</taxon>
        <taxon>Actinomycetes</taxon>
        <taxon>Mycobacteriales</taxon>
        <taxon>Corynebacteriaceae</taxon>
        <taxon>Corynebacterium</taxon>
    </lineage>
</organism>
<reference key="1">
    <citation type="journal article" date="2001" name="Arch. Microbiol.">
        <title>Molecular analysis of the cytochrome bc1-aa3 branch of the Corynebacterium glutamicum respiratory chain containing an unusual diheme cytochrome c1.</title>
        <authorList>
            <person name="Niebisch A."/>
            <person name="Bott M."/>
        </authorList>
    </citation>
    <scope>NUCLEOTIDE SEQUENCE [GENOMIC DNA]</scope>
    <scope>FUNCTION</scope>
    <scope>DISRUPTION PHENOTYPE</scope>
    <source>
        <strain>ATCC 13032 / DSM 20300 / JCM 1318 / BCRC 11384 / CCUG 27702 / LMG 3730 / NBRC 12168 / NCIMB 10025 / NRRL B-2784 / 534</strain>
    </source>
</reference>
<reference key="2">
    <citation type="journal article" date="2001" name="Biochim. Biophys. Acta">
        <title>A novel hydrophobic diheme c-type cytochrome. Purification from Corynebacterium glutamicum and analysis of the QcrCBA operon encoding three subunit proteins of a putative cytochrome reductase complex.</title>
        <authorList>
            <person name="Sone N."/>
            <person name="Nagata K."/>
            <person name="Kojima H."/>
            <person name="Tajima J."/>
            <person name="Kodera Y."/>
            <person name="Kanamaru T."/>
            <person name="Noguchi S."/>
            <person name="Sakamoto J."/>
        </authorList>
    </citation>
    <scope>NUCLEOTIDE SEQUENCE [GENOMIC DNA]</scope>
    <source>
        <strain>ATCC 13869 / DSMZ 1412 / NCIMB 9567</strain>
    </source>
</reference>
<reference key="3">
    <citation type="journal article" date="2003" name="Appl. Microbiol. Biotechnol.">
        <title>The Corynebacterium glutamicum genome: features and impacts on biotechnological processes.</title>
        <authorList>
            <person name="Ikeda M."/>
            <person name="Nakagawa S."/>
        </authorList>
    </citation>
    <scope>NUCLEOTIDE SEQUENCE [LARGE SCALE GENOMIC DNA]</scope>
    <source>
        <strain>ATCC 13032 / DSM 20300 / JCM 1318 / BCRC 11384 / CCUG 27702 / LMG 3730 / NBRC 12168 / NCIMB 10025 / NRRL B-2784 / 534</strain>
    </source>
</reference>
<reference key="4">
    <citation type="journal article" date="2003" name="J. Biotechnol.">
        <title>The complete Corynebacterium glutamicum ATCC 13032 genome sequence and its impact on the production of L-aspartate-derived amino acids and vitamins.</title>
        <authorList>
            <person name="Kalinowski J."/>
            <person name="Bathe B."/>
            <person name="Bartels D."/>
            <person name="Bischoff N."/>
            <person name="Bott M."/>
            <person name="Burkovski A."/>
            <person name="Dusch N."/>
            <person name="Eggeling L."/>
            <person name="Eikmanns B.J."/>
            <person name="Gaigalat L."/>
            <person name="Goesmann A."/>
            <person name="Hartmann M."/>
            <person name="Huthmacher K."/>
            <person name="Kraemer R."/>
            <person name="Linke B."/>
            <person name="McHardy A.C."/>
            <person name="Meyer F."/>
            <person name="Moeckel B."/>
            <person name="Pfefferle W."/>
            <person name="Puehler A."/>
            <person name="Rey D.A."/>
            <person name="Rueckert C."/>
            <person name="Rupp O."/>
            <person name="Sahm H."/>
            <person name="Wendisch V.F."/>
            <person name="Wiegraebe I."/>
            <person name="Tauch A."/>
        </authorList>
    </citation>
    <scope>NUCLEOTIDE SEQUENCE [LARGE SCALE GENOMIC DNA]</scope>
    <source>
        <strain>ATCC 13032 / DSM 20300 / JCM 1318 / BCRC 11384 / CCUG 27702 / LMG 3730 / NBRC 12168 / NCIMB 10025 / NRRL B-2784 / 534</strain>
    </source>
</reference>
<reference key="5">
    <citation type="journal article" date="2003" name="J. Biol. Chem.">
        <title>Purification of a cytochrome bc1-aa3 supercomplex with quinol oxidase activity from Corynebacterium glutamicum. Identification of a fourth subunity of cytochrome aa3 oxidase and mutational analysis of diheme cytochrome c1.</title>
        <authorList>
            <person name="Niebisch A."/>
            <person name="Bott M."/>
        </authorList>
    </citation>
    <scope>FUNCTION</scope>
    <scope>SUBUNIT</scope>
    <scope>DETECTION IN A SUPERCOMPLEX WITH CYTOCHROME C OXIDASE (CYTOCHROME AA3)</scope>
    <source>
        <strain>ATCC 13032 / DSM 20300 / JCM 1318 / BCRC 11384 / CCUG 27702 / LMG 3730 / NBRC 12168 / NCIMB 10025 / NRRL B-2784 / 534</strain>
    </source>
</reference>
<keyword id="KW-0001">2Fe-2S</keyword>
<keyword id="KW-0002">3D-structure</keyword>
<keyword id="KW-1003">Cell membrane</keyword>
<keyword id="KW-1015">Disulfide bond</keyword>
<keyword id="KW-0249">Electron transport</keyword>
<keyword id="KW-0408">Iron</keyword>
<keyword id="KW-0411">Iron-sulfur</keyword>
<keyword id="KW-0472">Membrane</keyword>
<keyword id="KW-0479">Metal-binding</keyword>
<keyword id="KW-0560">Oxidoreductase</keyword>
<keyword id="KW-1185">Reference proteome</keyword>
<keyword id="KW-0679">Respiratory chain</keyword>
<keyword id="KW-0812">Transmembrane</keyword>
<keyword id="KW-1133">Transmembrane helix</keyword>
<keyword id="KW-0813">Transport</keyword>
<protein>
    <recommendedName>
        <fullName>Cytochrome bc1 complex Rieske iron-sulfur subunit</fullName>
    </recommendedName>
    <alternativeName>
        <fullName>Cytochrome bc1 reductase complex subunit QcrA</fullName>
    </alternativeName>
    <alternativeName>
        <fullName>Menaquinol--cytochrome c reductase iron-sulfur subunit</fullName>
    </alternativeName>
    <alternativeName>
        <fullName>Rieske iron-sulfur protein</fullName>
    </alternativeName>
</protein>
<accession>Q79VE8</accession>
<accession>Q9AEL6</accession>
<accession>Q9F482</accession>
<sequence length="408" mass="45184">MSNNNDKQYTTQELNAMSNEDLARLGTELDDVTIAYRKERFPIANDPAEKRAARAVTFWLVLGIIGGLGFLATYIFWPWEYKAHGDEGLLAYTLYTPMLGITSGLCILSLGFAVVLYVKKFIPEEIAVQRRHDGPSEEVDRRTIVALLNDSWQTSTLGRRKLIMGLAGGGAVLAGLTIIAPMGGMIKNPWNPKEGPMDVQGDGTLWTSGWTLVENDVKVYLGRDTAAIAESHTDATGEHWSTTGVSRLVRMRPEDLAAASMETVFPLPAEMVNDGAEYDPAKDVYEHQMHSVHGPRNAVMLIRLRTADAEKVIEREGQESFHYGDYYAYSKICTHIGCPTSLYEAQTNRILCPCHQSQFDALHYGKPVFGPAARALPQLPITVDEEGYLIAAGNFIEPLGPAFWERKS</sequence>